<accession>A0A0U1LQE1</accession>
<protein>
    <recommendedName>
        <fullName evidence="7">ABC-type transporter cctS</fullName>
    </recommendedName>
    <alternativeName>
        <fullName evidence="7">Cyclochlorotine biosynthesis protein S</fullName>
    </alternativeName>
</protein>
<evidence type="ECO:0000255" key="1"/>
<evidence type="ECO:0000255" key="2">
    <source>
        <dbReference type="PROSITE-ProRule" id="PRU00434"/>
    </source>
</evidence>
<evidence type="ECO:0000255" key="3">
    <source>
        <dbReference type="PROSITE-ProRule" id="PRU00441"/>
    </source>
</evidence>
<evidence type="ECO:0000255" key="4">
    <source>
        <dbReference type="PROSITE-ProRule" id="PRU00498"/>
    </source>
</evidence>
<evidence type="ECO:0000269" key="5">
    <source>
    </source>
</evidence>
<evidence type="ECO:0000269" key="6">
    <source>
    </source>
</evidence>
<evidence type="ECO:0000303" key="7">
    <source>
    </source>
</evidence>
<evidence type="ECO:0000305" key="8"/>
<evidence type="ECO:0000305" key="9">
    <source>
    </source>
</evidence>
<comment type="function">
    <text evidence="5 6 9">ABC-type transporter; part of the gene cluster that mediates the biosynthesis of the mycotoxin cyclochlorotine, a hepatotoxic and carcinogenic cyclic chlorinated pentapeptide (PubMed:26954535, PubMed:33736433). CctS is essential for the biosynthesis of cyclochlorotine, maybe as a chloride channel that supplies chloride for chlorination by cctP2 (Probable).</text>
</comment>
<comment type="pathway">
    <text evidence="6">Mycotoxin biosynthesis.</text>
</comment>
<comment type="subcellular location">
    <subcellularLocation>
        <location evidence="1">Membrane</location>
        <topology evidence="1">Multi-pass membrane protein</topology>
    </subcellularLocation>
</comment>
<comment type="disruption phenotype">
    <text evidence="6">Impairs the production of cyclochlorotine.</text>
</comment>
<comment type="similarity">
    <text evidence="8">Belongs to the ABC transporter superfamily.</text>
</comment>
<gene>
    <name evidence="7" type="primary">cctS</name>
    <name type="ORF">PISL3812_02624</name>
</gene>
<feature type="chain" id="PRO_0000438672" description="ABC-type transporter cctS">
    <location>
        <begin position="1"/>
        <end position="1553"/>
    </location>
</feature>
<feature type="transmembrane region" description="Helical" evidence="1">
    <location>
        <begin position="27"/>
        <end position="47"/>
    </location>
</feature>
<feature type="transmembrane region" description="Helical" evidence="1">
    <location>
        <begin position="90"/>
        <end position="110"/>
    </location>
</feature>
<feature type="transmembrane region" description="Helical" evidence="1">
    <location>
        <begin position="114"/>
        <end position="134"/>
    </location>
</feature>
<feature type="transmembrane region" description="Helical" evidence="1">
    <location>
        <begin position="151"/>
        <end position="171"/>
    </location>
</feature>
<feature type="transmembrane region" description="Helical" evidence="1">
    <location>
        <begin position="177"/>
        <end position="197"/>
    </location>
</feature>
<feature type="transmembrane region" description="Helical" evidence="3">
    <location>
        <begin position="286"/>
        <end position="306"/>
    </location>
</feature>
<feature type="transmembrane region" description="Helical" evidence="3">
    <location>
        <begin position="324"/>
        <end position="344"/>
    </location>
</feature>
<feature type="transmembrane region" description="Helical" evidence="3">
    <location>
        <begin position="413"/>
        <end position="433"/>
    </location>
</feature>
<feature type="transmembrane region" description="Helical" evidence="3">
    <location>
        <begin position="438"/>
        <end position="458"/>
    </location>
</feature>
<feature type="transmembrane region" description="Helical" evidence="3">
    <location>
        <begin position="527"/>
        <end position="547"/>
    </location>
</feature>
<feature type="transmembrane region" description="Helical" evidence="3">
    <location>
        <begin position="550"/>
        <end position="570"/>
    </location>
</feature>
<feature type="transmembrane region" description="Helical" evidence="3">
    <location>
        <begin position="948"/>
        <end position="970"/>
    </location>
</feature>
<feature type="transmembrane region" description="Helical" evidence="3">
    <location>
        <begin position="1017"/>
        <end position="1037"/>
    </location>
</feature>
<feature type="transmembrane region" description="Helical" evidence="3">
    <location>
        <begin position="1086"/>
        <end position="1108"/>
    </location>
</feature>
<feature type="transmembrane region" description="Helical" evidence="3">
    <location>
        <begin position="1113"/>
        <end position="1135"/>
    </location>
</feature>
<feature type="transmembrane region" description="Helical" evidence="3">
    <location>
        <begin position="1204"/>
        <end position="1224"/>
    </location>
</feature>
<feature type="transmembrane region" description="Helical" evidence="3">
    <location>
        <begin position="1229"/>
        <end position="1249"/>
    </location>
</feature>
<feature type="domain" description="ABC transmembrane type-1 1" evidence="3">
    <location>
        <begin position="293"/>
        <end position="582"/>
    </location>
</feature>
<feature type="domain" description="ABC transporter 1" evidence="2">
    <location>
        <begin position="635"/>
        <end position="874"/>
    </location>
</feature>
<feature type="domain" description="ABC transmembrane type-1 2" evidence="3">
    <location>
        <begin position="951"/>
        <end position="1255"/>
    </location>
</feature>
<feature type="domain" description="ABC transporter 2" evidence="2">
    <location>
        <begin position="1294"/>
        <end position="1533"/>
    </location>
</feature>
<feature type="binding site" evidence="2">
    <location>
        <begin position="670"/>
        <end position="677"/>
    </location>
    <ligand>
        <name>ATP</name>
        <dbReference type="ChEBI" id="CHEBI:30616"/>
    </ligand>
</feature>
<feature type="binding site" evidence="2">
    <location>
        <begin position="1328"/>
        <end position="1335"/>
    </location>
    <ligand>
        <name>ATP</name>
        <dbReference type="ChEBI" id="CHEBI:30616"/>
    </ligand>
</feature>
<feature type="glycosylation site" description="N-linked (GlcNAc...) asparagine" evidence="4">
    <location>
        <position position="176"/>
    </location>
</feature>
<feature type="glycosylation site" description="N-linked (GlcNAc...) asparagine" evidence="4">
    <location>
        <position position="524"/>
    </location>
</feature>
<feature type="glycosylation site" description="N-linked (GlcNAc...) asparagine" evidence="4">
    <location>
        <position position="617"/>
    </location>
</feature>
<feature type="glycosylation site" description="N-linked (GlcNAc...) asparagine" evidence="4">
    <location>
        <position position="725"/>
    </location>
</feature>
<feature type="glycosylation site" description="N-linked (GlcNAc...) asparagine" evidence="4">
    <location>
        <position position="992"/>
    </location>
</feature>
<feature type="glycosylation site" description="N-linked (GlcNAc...) asparagine" evidence="4">
    <location>
        <position position="1085"/>
    </location>
</feature>
<name>CCTS_TALIS</name>
<organism>
    <name type="scientific">Talaromyces islandicus</name>
    <name type="common">Penicillium islandicum</name>
    <dbReference type="NCBI Taxonomy" id="28573"/>
    <lineage>
        <taxon>Eukaryota</taxon>
        <taxon>Fungi</taxon>
        <taxon>Dikarya</taxon>
        <taxon>Ascomycota</taxon>
        <taxon>Pezizomycotina</taxon>
        <taxon>Eurotiomycetes</taxon>
        <taxon>Eurotiomycetidae</taxon>
        <taxon>Eurotiales</taxon>
        <taxon>Trichocomaceae</taxon>
        <taxon>Talaromyces</taxon>
        <taxon>Talaromyces sect. Islandici</taxon>
    </lineage>
</organism>
<keyword id="KW-0067">ATP-binding</keyword>
<keyword id="KW-0325">Glycoprotein</keyword>
<keyword id="KW-0472">Membrane</keyword>
<keyword id="KW-0547">Nucleotide-binding</keyword>
<keyword id="KW-1185">Reference proteome</keyword>
<keyword id="KW-0677">Repeat</keyword>
<keyword id="KW-0812">Transmembrane</keyword>
<keyword id="KW-1133">Transmembrane helix</keyword>
<keyword id="KW-0813">Transport</keyword>
<keyword id="KW-0843">Virulence</keyword>
<sequence>MNFRCSSPLWYDDHLSDCVVNHYLSTLIPLTACLASAIACLISYFHARQNAKHIDTGFHPVASSEDEAVDQIAHVSQQYITAIPPVIEKLEVALILAEISIAIFLLIFSGENTDLTSVFASAVSSIYLLLILFVRLTRSLQSYVDLQPHSSVLYTLQWTCLTAIVHAAILGNSERNFTIATLVRFALFTFLCLFHWTAPRIPVEPYDEDHVLFLDPSEDETASLLSRMTFSWLDKLVWKAYRATLQVSDLYQLNHNHRSGVVAPRFKNTATNSLLWRLFGFFKSDLLWQGAWATLNSFAVFVPPVLMRSLLEYLEVPDLASQSTAWLYVTGLLVAGIVAGVAGCQCDWKGREMAARTRAVLINEIYTKVLRKGVALHLQTNSEQPEAADNFASDGNIFNLLTVDTEHVSEMSGYLYLVWITFPVQTAIGTYLLYRLLGISGIVGVALMLGLLPLNILISRRLVAVQARVLTASDARIQASSEILNNVRTIKYSAWEAVFKKRVLSKRRIELVEMRSRFIWWSINMTTFFSLPLIVTILTLFFYTVVWDNSMGTAVAFPALVIFSILRIPFNRIADAITFLLRAHVSLGRIEKFLQEQETGKYEQLSRTDSVEVGFNNATLTWPNGGFGNKAVTENKRSDIQLTELPSMRPFKLKGLNIRFQPGALNVICGPSGSGKSSLLLALLGEMALVNGQVFLPHKHNWHELSTDSLTETTAYCPQEAWILNRTIRANIVFDLPFDGRRYEAVLEAVALRPDIASFDQGDQTLAGEGGSRLSGGQKQRVSLARALYSRSKYVLLDDCLSAVDSKTANHIFFHAVKGDLMQGRTCMFATNSIQLTIPHCDYIVLLDDGRVRGQGTAEELVSEGRIDADIMQNKAEFGSEKPGAYDTIELDHAIKSPSSRSSLDTVSLLEVDPQQEDPEAGYEESKAEGAVAWSVIRTYLVTLGPPWYWVLVLFMFGIQQFISLATNIWIKEWAVRYDMLDNFAFDPIQRNATTRDETLDEPEEPQKVQARYYMAIYVAICLAYAFFTFARDLIVFYGSLKASSEIYERLLNSVLFAKLLFFDRIPLGQITNRFSRDVEVLDQNISTFSINTLQIAASLVMIIVFISSVVPAFLIAAVFICVAYWFVMTIFINGARDLRRIESVERSPVYQQFSEALSGCVSIRAYARASIFTAQNQVLVDRLNSPYLLQWASQQWLGFRVNFLGSLILFFTGAFVVWDLESVDPSSAALVLTYAAMFSESIMWFVQLYAIVQQNLNSVERVVEYTEIEQEANQPLKRAVYDLPEDWPSRGGVRFDAYTTRYAPELPPVLNDITFNVPPGKRVAVVGRTGAGKSTLTLALIRGLEAELGRIEIDGIDISEVTLDRLRQAVTVVPQDPGVFRGTLRDNLDPLHLYSNEEMIETLRAVRLLDAVRTYIPGNSATPLDCLDHPANALSRGQRQLLCIARTLLRRSRVLVFDEATASIDHTTDAAIQESLRASVTVGTTVITVAHRLLTIADYDKVVVLDAGCVAEQGSVQELLDRDDDGIFRRLCVQSGDLEKIERVAAEKSGRK</sequence>
<reference key="1">
    <citation type="journal article" date="2015" name="J. Biotechnol.">
        <title>Draft genome sequence of Talaromyces islandicus ('Penicillium islandicum') WF-38-12, a neglected mold with significant biotechnological potential.</title>
        <authorList>
            <person name="Schafhauser T."/>
            <person name="Wibberg D."/>
            <person name="Rueckert C."/>
            <person name="Winkler A."/>
            <person name="Flor L."/>
            <person name="van Pee K.-H."/>
            <person name="Fewer D.P."/>
            <person name="Sivonen K."/>
            <person name="Jahn L."/>
            <person name="Ludwig-Mueller J."/>
            <person name="Caradec T."/>
            <person name="Jacques P."/>
            <person name="Huijbers M.M.E."/>
            <person name="van Berkel W.J.H."/>
            <person name="Weber T."/>
            <person name="Wohlleben W."/>
            <person name="Kalinowski J."/>
        </authorList>
    </citation>
    <scope>NUCLEOTIDE SEQUENCE [LARGE SCALE GENOMIC DNA]</scope>
    <source>
        <strain>ATCC 26535 / WF-38-12</strain>
    </source>
</reference>
<reference key="2">
    <citation type="journal article" date="2016" name="Environ. Microbiol.">
        <title>The cyclochlorotine mycotoxin is produced by the nonribosomal peptide synthetase CctN in Talaromyces islandicus ('Penicillium islandicum').</title>
        <authorList>
            <person name="Schafhauser T."/>
            <person name="Kirchner N."/>
            <person name="Kulik A."/>
            <person name="Huijbers M.M."/>
            <person name="Flor L."/>
            <person name="Caradec T."/>
            <person name="Fewer D.P."/>
            <person name="Gross H."/>
            <person name="Jacques P."/>
            <person name="Jahn L."/>
            <person name="Jokela J."/>
            <person name="Leclere V."/>
            <person name="Ludwig-Mueller J."/>
            <person name="Sivonen K."/>
            <person name="van Berkel W.J."/>
            <person name="Weber T."/>
            <person name="Wohlleben W."/>
            <person name="van Pee K.H."/>
        </authorList>
    </citation>
    <scope>FUNCTION</scope>
</reference>
<reference key="3">
    <citation type="journal article" date="2021" name="Org. Lett.">
        <title>Biosynthesis of cyclochlorotine: identification of the genes involved in oxidative transformations and intramolecular O,N-transacylation.</title>
        <authorList>
            <person name="Jiang Y."/>
            <person name="Ozaki T."/>
            <person name="Liu C."/>
            <person name="Igarashi Y."/>
            <person name="Ye Y."/>
            <person name="Tang S."/>
            <person name="Ye T."/>
            <person name="Maruyama J.I."/>
            <person name="Minami A."/>
            <person name="Oikawa H."/>
        </authorList>
    </citation>
    <scope>FUNCTION</scope>
    <scope>DISRUPTION PHENOTYPE</scope>
    <scope>PATHWAY</scope>
</reference>
<proteinExistence type="inferred from homology"/>
<dbReference type="EMBL" id="CVMT01000002">
    <property type="protein sequence ID" value="CRG85577.1"/>
    <property type="molecule type" value="Genomic_DNA"/>
</dbReference>
<dbReference type="SMR" id="A0A0U1LQE1"/>
<dbReference type="STRING" id="28573.A0A0U1LQE1"/>
<dbReference type="GlyCosmos" id="A0A0U1LQE1">
    <property type="glycosylation" value="6 sites, No reported glycans"/>
</dbReference>
<dbReference type="OMA" id="ATHHTHL"/>
<dbReference type="OrthoDB" id="6500128at2759"/>
<dbReference type="Proteomes" id="UP000054383">
    <property type="component" value="Unassembled WGS sequence"/>
</dbReference>
<dbReference type="GO" id="GO:0000329">
    <property type="term" value="C:fungal-type vacuole membrane"/>
    <property type="evidence" value="ECO:0007669"/>
    <property type="project" value="TreeGrafter"/>
</dbReference>
<dbReference type="GO" id="GO:0140359">
    <property type="term" value="F:ABC-type transporter activity"/>
    <property type="evidence" value="ECO:0007669"/>
    <property type="project" value="InterPro"/>
</dbReference>
<dbReference type="GO" id="GO:0005524">
    <property type="term" value="F:ATP binding"/>
    <property type="evidence" value="ECO:0007669"/>
    <property type="project" value="UniProtKB-KW"/>
</dbReference>
<dbReference type="GO" id="GO:0016887">
    <property type="term" value="F:ATP hydrolysis activity"/>
    <property type="evidence" value="ECO:0007669"/>
    <property type="project" value="InterPro"/>
</dbReference>
<dbReference type="CDD" id="cd18596">
    <property type="entry name" value="ABC_6TM_VMR1_D1_like"/>
    <property type="match status" value="1"/>
</dbReference>
<dbReference type="CDD" id="cd18604">
    <property type="entry name" value="ABC_6TM_VMR1_D2_like"/>
    <property type="match status" value="1"/>
</dbReference>
<dbReference type="CDD" id="cd03250">
    <property type="entry name" value="ABCC_MRP_domain1"/>
    <property type="match status" value="1"/>
</dbReference>
<dbReference type="CDD" id="cd03244">
    <property type="entry name" value="ABCC_MRP_domain2"/>
    <property type="match status" value="1"/>
</dbReference>
<dbReference type="FunFam" id="3.40.50.300:FF:000838">
    <property type="entry name" value="ABC multidrug transporter (Eurofung)"/>
    <property type="match status" value="1"/>
</dbReference>
<dbReference type="FunFam" id="1.20.1560.10:FF:000010">
    <property type="entry name" value="Multidrug resistance-associated ABC transporter"/>
    <property type="match status" value="1"/>
</dbReference>
<dbReference type="Gene3D" id="1.20.1560.10">
    <property type="entry name" value="ABC transporter type 1, transmembrane domain"/>
    <property type="match status" value="2"/>
</dbReference>
<dbReference type="Gene3D" id="3.40.50.300">
    <property type="entry name" value="P-loop containing nucleotide triphosphate hydrolases"/>
    <property type="match status" value="2"/>
</dbReference>
<dbReference type="InterPro" id="IPR003593">
    <property type="entry name" value="AAA+_ATPase"/>
</dbReference>
<dbReference type="InterPro" id="IPR011527">
    <property type="entry name" value="ABC1_TM_dom"/>
</dbReference>
<dbReference type="InterPro" id="IPR036640">
    <property type="entry name" value="ABC1_TM_sf"/>
</dbReference>
<dbReference type="InterPro" id="IPR003439">
    <property type="entry name" value="ABC_transporter-like_ATP-bd"/>
</dbReference>
<dbReference type="InterPro" id="IPR017871">
    <property type="entry name" value="ABC_transporter-like_CS"/>
</dbReference>
<dbReference type="InterPro" id="IPR050173">
    <property type="entry name" value="ABC_transporter_C-like"/>
</dbReference>
<dbReference type="InterPro" id="IPR027417">
    <property type="entry name" value="P-loop_NTPase"/>
</dbReference>
<dbReference type="PANTHER" id="PTHR24223:SF353">
    <property type="entry name" value="ABC TRANSPORTER ATP-BINDING PROTEIN_PERMEASE VMR1-RELATED"/>
    <property type="match status" value="1"/>
</dbReference>
<dbReference type="PANTHER" id="PTHR24223">
    <property type="entry name" value="ATP-BINDING CASSETTE SUB-FAMILY C"/>
    <property type="match status" value="1"/>
</dbReference>
<dbReference type="Pfam" id="PF00664">
    <property type="entry name" value="ABC_membrane"/>
    <property type="match status" value="2"/>
</dbReference>
<dbReference type="Pfam" id="PF00005">
    <property type="entry name" value="ABC_tran"/>
    <property type="match status" value="2"/>
</dbReference>
<dbReference type="SMART" id="SM00382">
    <property type="entry name" value="AAA"/>
    <property type="match status" value="2"/>
</dbReference>
<dbReference type="SUPFAM" id="SSF90123">
    <property type="entry name" value="ABC transporter transmembrane region"/>
    <property type="match status" value="2"/>
</dbReference>
<dbReference type="SUPFAM" id="SSF52540">
    <property type="entry name" value="P-loop containing nucleoside triphosphate hydrolases"/>
    <property type="match status" value="2"/>
</dbReference>
<dbReference type="PROSITE" id="PS50929">
    <property type="entry name" value="ABC_TM1F"/>
    <property type="match status" value="2"/>
</dbReference>
<dbReference type="PROSITE" id="PS00211">
    <property type="entry name" value="ABC_TRANSPORTER_1"/>
    <property type="match status" value="1"/>
</dbReference>
<dbReference type="PROSITE" id="PS50893">
    <property type="entry name" value="ABC_TRANSPORTER_2"/>
    <property type="match status" value="2"/>
</dbReference>